<evidence type="ECO:0000250" key="1"/>
<evidence type="ECO:0000255" key="2">
    <source>
        <dbReference type="PROSITE-ProRule" id="PRU00114"/>
    </source>
</evidence>
<evidence type="ECO:0000305" key="3"/>
<feature type="chain" id="PRO_0000080732" description="Beta-2-microglobulin">
    <location>
        <begin position="1"/>
        <end position="99"/>
    </location>
</feature>
<feature type="domain" description="Ig-like C1-type">
    <location>
        <begin position="5"/>
        <end position="93"/>
    </location>
</feature>
<feature type="disulfide bond" evidence="2">
    <location>
        <begin position="25"/>
        <end position="80"/>
    </location>
</feature>
<organism>
    <name type="scientific">Cavia porcellus</name>
    <name type="common">Guinea pig</name>
    <dbReference type="NCBI Taxonomy" id="10141"/>
    <lineage>
        <taxon>Eukaryota</taxon>
        <taxon>Metazoa</taxon>
        <taxon>Chordata</taxon>
        <taxon>Craniata</taxon>
        <taxon>Vertebrata</taxon>
        <taxon>Euteleostomi</taxon>
        <taxon>Mammalia</taxon>
        <taxon>Eutheria</taxon>
        <taxon>Euarchontoglires</taxon>
        <taxon>Glires</taxon>
        <taxon>Rodentia</taxon>
        <taxon>Hystricomorpha</taxon>
        <taxon>Caviidae</taxon>
        <taxon>Cavia</taxon>
    </lineage>
</organism>
<reference key="1">
    <citation type="journal article" date="1980" name="Mol. Immunol.">
        <title>The primary structure of guinea pig beta 2-microglobulin.</title>
        <authorList>
            <person name="Wolfe P.B."/>
            <person name="Cebra J.J."/>
        </authorList>
    </citation>
    <scope>PROTEIN SEQUENCE</scope>
</reference>
<sequence length="99" mass="11417">VLHAPRVQVYSRHPAENGKQNFINCYVSGFHPPQIEVELLKNGKKIDNVEMSDLSFSKDWTFYLLVHAAFTPNDSDEYSCRVSHITLSEPKIVKWDPNK</sequence>
<keyword id="KW-0903">Direct protein sequencing</keyword>
<keyword id="KW-1015">Disulfide bond</keyword>
<keyword id="KW-0391">Immunity</keyword>
<keyword id="KW-0393">Immunoglobulin domain</keyword>
<keyword id="KW-0490">MHC I</keyword>
<keyword id="KW-1185">Reference proteome</keyword>
<keyword id="KW-0964">Secreted</keyword>
<protein>
    <recommendedName>
        <fullName>Beta-2-microglobulin</fullName>
    </recommendedName>
</protein>
<comment type="function">
    <text evidence="1">Component of the class I major histocompatibility complex (MHC). Involved in the presentation of peptide antigens to the immune system (By similarity).</text>
</comment>
<comment type="subunit">
    <text evidence="1">Heterodimer of an alpha chain and a beta chain. Beta-2-microglobulin is the beta-chain of major histocompatibility complex class I molecules (By similarity).</text>
</comment>
<comment type="subcellular location">
    <subcellularLocation>
        <location evidence="1">Secreted</location>
    </subcellularLocation>
</comment>
<comment type="similarity">
    <text evidence="3">Belongs to the beta-2-microglobulin family.</text>
</comment>
<accession>P01886</accession>
<proteinExistence type="evidence at protein level"/>
<dbReference type="PIR" id="A02181">
    <property type="entry name" value="MGGPB2"/>
</dbReference>
<dbReference type="SMR" id="P01886"/>
<dbReference type="FunCoup" id="P01886">
    <property type="interactions" value="605"/>
</dbReference>
<dbReference type="STRING" id="10141.ENSCPOP00000023611"/>
<dbReference type="eggNOG" id="ENOG502S8GM">
    <property type="taxonomic scope" value="Eukaryota"/>
</dbReference>
<dbReference type="HOGENOM" id="CLU_163066_0_0_1"/>
<dbReference type="InParanoid" id="P01886"/>
<dbReference type="Proteomes" id="UP000005447">
    <property type="component" value="Unassembled WGS sequence"/>
</dbReference>
<dbReference type="GO" id="GO:0005576">
    <property type="term" value="C:extracellular region"/>
    <property type="evidence" value="ECO:0007669"/>
    <property type="project" value="UniProtKB-SubCell"/>
</dbReference>
<dbReference type="GO" id="GO:0042612">
    <property type="term" value="C:MHC class I protein complex"/>
    <property type="evidence" value="ECO:0007669"/>
    <property type="project" value="UniProtKB-KW"/>
</dbReference>
<dbReference type="GO" id="GO:0002474">
    <property type="term" value="P:antigen processing and presentation of peptide antigen via MHC class I"/>
    <property type="evidence" value="ECO:0007669"/>
    <property type="project" value="UniProtKB-KW"/>
</dbReference>
<dbReference type="GO" id="GO:0006955">
    <property type="term" value="P:immune response"/>
    <property type="evidence" value="ECO:0007669"/>
    <property type="project" value="InterPro"/>
</dbReference>
<dbReference type="CDD" id="cd05770">
    <property type="entry name" value="IgC1_beta2m"/>
    <property type="match status" value="1"/>
</dbReference>
<dbReference type="FunFam" id="2.60.40.10:FF:001005">
    <property type="entry name" value="Beta-2-microglobulin"/>
    <property type="match status" value="1"/>
</dbReference>
<dbReference type="Gene3D" id="2.60.40.10">
    <property type="entry name" value="Immunoglobulins"/>
    <property type="match status" value="1"/>
</dbReference>
<dbReference type="InterPro" id="IPR015707">
    <property type="entry name" value="B2Microglobulin"/>
</dbReference>
<dbReference type="InterPro" id="IPR007110">
    <property type="entry name" value="Ig-like_dom"/>
</dbReference>
<dbReference type="InterPro" id="IPR036179">
    <property type="entry name" value="Ig-like_dom_sf"/>
</dbReference>
<dbReference type="InterPro" id="IPR013783">
    <property type="entry name" value="Ig-like_fold"/>
</dbReference>
<dbReference type="InterPro" id="IPR003006">
    <property type="entry name" value="Ig/MHC_CS"/>
</dbReference>
<dbReference type="InterPro" id="IPR003597">
    <property type="entry name" value="Ig_C1-set"/>
</dbReference>
<dbReference type="InterPro" id="IPR050160">
    <property type="entry name" value="MHC/Immunoglobulin"/>
</dbReference>
<dbReference type="PANTHER" id="PTHR19944:SF62">
    <property type="entry name" value="BETA-2-MICROGLOBULIN"/>
    <property type="match status" value="1"/>
</dbReference>
<dbReference type="PANTHER" id="PTHR19944">
    <property type="entry name" value="MHC CLASS II-RELATED"/>
    <property type="match status" value="1"/>
</dbReference>
<dbReference type="Pfam" id="PF07654">
    <property type="entry name" value="C1-set"/>
    <property type="match status" value="1"/>
</dbReference>
<dbReference type="SMART" id="SM00407">
    <property type="entry name" value="IGc1"/>
    <property type="match status" value="1"/>
</dbReference>
<dbReference type="SUPFAM" id="SSF48726">
    <property type="entry name" value="Immunoglobulin"/>
    <property type="match status" value="1"/>
</dbReference>
<dbReference type="PROSITE" id="PS50835">
    <property type="entry name" value="IG_LIKE"/>
    <property type="match status" value="1"/>
</dbReference>
<dbReference type="PROSITE" id="PS00290">
    <property type="entry name" value="IG_MHC"/>
    <property type="match status" value="1"/>
</dbReference>
<gene>
    <name type="primary">B2M</name>
</gene>
<name>B2MG_CAVPO</name>